<evidence type="ECO:0000255" key="1"/>
<evidence type="ECO:0000269" key="2">
    <source>
    </source>
</evidence>
<evidence type="ECO:0000269" key="3">
    <source>
    </source>
</evidence>
<evidence type="ECO:0000269" key="4">
    <source>
    </source>
</evidence>
<evidence type="ECO:0000269" key="5">
    <source>
    </source>
</evidence>
<evidence type="ECO:0000269" key="6">
    <source>
    </source>
</evidence>
<evidence type="ECO:0000305" key="7"/>
<proteinExistence type="evidence at protein level"/>
<dbReference type="EC" id="2.7.1.140"/>
<dbReference type="EC" id="2.7.1.151"/>
<dbReference type="EMBL" id="AY147936">
    <property type="protein sequence ID" value="AAN63058.1"/>
    <property type="molecule type" value="mRNA"/>
</dbReference>
<dbReference type="EMBL" id="AJ245521">
    <property type="protein sequence ID" value="CAC43071.1"/>
    <property type="molecule type" value="mRNA"/>
</dbReference>
<dbReference type="EMBL" id="AB010069">
    <property type="protein sequence ID" value="BAB10076.1"/>
    <property type="molecule type" value="Genomic_DNA"/>
</dbReference>
<dbReference type="EMBL" id="CP002688">
    <property type="protein sequence ID" value="AED97513.1"/>
    <property type="molecule type" value="Genomic_DNA"/>
</dbReference>
<dbReference type="EMBL" id="CP002688">
    <property type="protein sequence ID" value="ANM70375.1"/>
    <property type="molecule type" value="Genomic_DNA"/>
</dbReference>
<dbReference type="EMBL" id="AJ243592">
    <property type="protein sequence ID" value="CAC43070.1"/>
    <property type="molecule type" value="Genomic_DNA"/>
</dbReference>
<dbReference type="EMBL" id="AF412073">
    <property type="protein sequence ID" value="AAL06526.1"/>
    <property type="molecule type" value="mRNA"/>
</dbReference>
<dbReference type="EMBL" id="AY072621">
    <property type="protein sequence ID" value="AAL62012.1"/>
    <property type="molecule type" value="mRNA"/>
</dbReference>
<dbReference type="EMBL" id="AY085862">
    <property type="protein sequence ID" value="AAM63075.1"/>
    <property type="molecule type" value="mRNA"/>
</dbReference>
<dbReference type="SMR" id="Q9FLT2"/>
<dbReference type="FunCoup" id="Q9FLT2">
    <property type="interactions" value="2613"/>
</dbReference>
<dbReference type="STRING" id="3702.Q9FLT2"/>
<dbReference type="iPTMnet" id="Q9FLT2"/>
<dbReference type="PaxDb" id="3702-AT5G61760.1"/>
<dbReference type="ProteomicsDB" id="248514"/>
<dbReference type="DNASU" id="836298"/>
<dbReference type="EnsemblPlants" id="AT5G61760.1">
    <property type="protein sequence ID" value="AT5G61760.1"/>
    <property type="gene ID" value="AT5G61760"/>
</dbReference>
<dbReference type="EnsemblPlants" id="AT5G61760.2">
    <property type="protein sequence ID" value="AT5G61760.2"/>
    <property type="gene ID" value="AT5G61760"/>
</dbReference>
<dbReference type="GeneID" id="836298"/>
<dbReference type="Gramene" id="AT5G61760.1">
    <property type="protein sequence ID" value="AT5G61760.1"/>
    <property type="gene ID" value="AT5G61760"/>
</dbReference>
<dbReference type="Gramene" id="AT5G61760.2">
    <property type="protein sequence ID" value="AT5G61760.2"/>
    <property type="gene ID" value="AT5G61760"/>
</dbReference>
<dbReference type="KEGG" id="ath:AT5G61760"/>
<dbReference type="Araport" id="AT5G61760"/>
<dbReference type="TAIR" id="AT5G61760">
    <property type="gene designation" value="IPK2BETA"/>
</dbReference>
<dbReference type="eggNOG" id="KOG1620">
    <property type="taxonomic scope" value="Eukaryota"/>
</dbReference>
<dbReference type="HOGENOM" id="CLU_042569_1_0_1"/>
<dbReference type="InParanoid" id="Q9FLT2"/>
<dbReference type="OMA" id="DCAFAAT"/>
<dbReference type="PhylomeDB" id="Q9FLT2"/>
<dbReference type="BioCyc" id="ARA:AT5G61760-MONOMER"/>
<dbReference type="BioCyc" id="MetaCyc:AT5G61760-MONOMER"/>
<dbReference type="BRENDA" id="2.7.1.151">
    <property type="organism ID" value="399"/>
</dbReference>
<dbReference type="BRENDA" id="2.7.4.21">
    <property type="organism ID" value="399"/>
</dbReference>
<dbReference type="PRO" id="PR:Q9FLT2"/>
<dbReference type="Proteomes" id="UP000006548">
    <property type="component" value="Chromosome 5"/>
</dbReference>
<dbReference type="ExpressionAtlas" id="Q9FLT2">
    <property type="expression patterns" value="baseline and differential"/>
</dbReference>
<dbReference type="GO" id="GO:0005634">
    <property type="term" value="C:nucleus"/>
    <property type="evidence" value="ECO:0000314"/>
    <property type="project" value="TAIR"/>
</dbReference>
<dbReference type="GO" id="GO:0090406">
    <property type="term" value="C:pollen tube"/>
    <property type="evidence" value="ECO:0000314"/>
    <property type="project" value="TAIR"/>
</dbReference>
<dbReference type="GO" id="GO:0005524">
    <property type="term" value="F:ATP binding"/>
    <property type="evidence" value="ECO:0007669"/>
    <property type="project" value="UniProtKB-KW"/>
</dbReference>
<dbReference type="GO" id="GO:0051765">
    <property type="term" value="F:inositol tetrakisphosphate kinase activity"/>
    <property type="evidence" value="ECO:0000314"/>
    <property type="project" value="TAIR"/>
</dbReference>
<dbReference type="GO" id="GO:0051766">
    <property type="term" value="F:inositol trisphosphate kinase activity"/>
    <property type="evidence" value="ECO:0000314"/>
    <property type="project" value="TAIR"/>
</dbReference>
<dbReference type="GO" id="GO:0102732">
    <property type="term" value="F:inositol-1,2,3,4,6-pentakisphosphate 5-kinase activity"/>
    <property type="evidence" value="ECO:0000314"/>
    <property type="project" value="FlyBase"/>
</dbReference>
<dbReference type="GO" id="GO:0047326">
    <property type="term" value="F:inositol-1,3,4,6-tetrakisphosphate 5-kinase activity"/>
    <property type="evidence" value="ECO:0007669"/>
    <property type="project" value="RHEA"/>
</dbReference>
<dbReference type="GO" id="GO:0052725">
    <property type="term" value="F:inositol-1,3,4-trisphosphate 6-kinase activity"/>
    <property type="evidence" value="ECO:0000314"/>
    <property type="project" value="TAIR"/>
</dbReference>
<dbReference type="GO" id="GO:0000824">
    <property type="term" value="F:inositol-1,4,5,6-tetrakisphosphate 3-kinase activity"/>
    <property type="evidence" value="ECO:0000314"/>
    <property type="project" value="TAIR"/>
</dbReference>
<dbReference type="GO" id="GO:0000823">
    <property type="term" value="F:inositol-1,4,5-trisphosphate 6-kinase activity"/>
    <property type="evidence" value="ECO:0000314"/>
    <property type="project" value="TAIR"/>
</dbReference>
<dbReference type="GO" id="GO:0019900">
    <property type="term" value="F:kinase binding"/>
    <property type="evidence" value="ECO:0000353"/>
    <property type="project" value="UniProtKB"/>
</dbReference>
<dbReference type="GO" id="GO:0009793">
    <property type="term" value="P:embryo development ending in seed dormancy"/>
    <property type="evidence" value="ECO:0000316"/>
    <property type="project" value="TAIR"/>
</dbReference>
<dbReference type="GO" id="GO:0010264">
    <property type="term" value="P:myo-inositol hexakisphosphate biosynthetic process"/>
    <property type="evidence" value="ECO:0000315"/>
    <property type="project" value="TAIR"/>
</dbReference>
<dbReference type="GO" id="GO:0009555">
    <property type="term" value="P:pollen development"/>
    <property type="evidence" value="ECO:0000316"/>
    <property type="project" value="TAIR"/>
</dbReference>
<dbReference type="GO" id="GO:0010183">
    <property type="term" value="P:pollen tube guidance"/>
    <property type="evidence" value="ECO:0000316"/>
    <property type="project" value="TAIR"/>
</dbReference>
<dbReference type="GO" id="GO:0006355">
    <property type="term" value="P:regulation of DNA-templated transcription"/>
    <property type="evidence" value="ECO:0000304"/>
    <property type="project" value="TAIR"/>
</dbReference>
<dbReference type="GO" id="GO:0009749">
    <property type="term" value="P:response to glucose"/>
    <property type="evidence" value="ECO:0000270"/>
    <property type="project" value="UniProtKB"/>
</dbReference>
<dbReference type="FunFam" id="3.30.470.160:FF:000004">
    <property type="entry name" value="Inositol polyphosphate multikinase alpha"/>
    <property type="match status" value="1"/>
</dbReference>
<dbReference type="Gene3D" id="3.30.470.160">
    <property type="entry name" value="Inositol polyphosphate kinase"/>
    <property type="match status" value="1"/>
</dbReference>
<dbReference type="InterPro" id="IPR005522">
    <property type="entry name" value="IPK"/>
</dbReference>
<dbReference type="InterPro" id="IPR038286">
    <property type="entry name" value="IPK_sf"/>
</dbReference>
<dbReference type="PANTHER" id="PTHR12400">
    <property type="entry name" value="INOSITOL POLYPHOSPHATE KINASE"/>
    <property type="match status" value="1"/>
</dbReference>
<dbReference type="PANTHER" id="PTHR12400:SF51">
    <property type="entry name" value="INOSITOL POLYPHOSPHATE MULTIKINASE"/>
    <property type="match status" value="1"/>
</dbReference>
<dbReference type="Pfam" id="PF03770">
    <property type="entry name" value="IPK"/>
    <property type="match status" value="1"/>
</dbReference>
<dbReference type="SUPFAM" id="SSF56104">
    <property type="entry name" value="SAICAR synthase-like"/>
    <property type="match status" value="1"/>
</dbReference>
<protein>
    <recommendedName>
        <fullName>Inositol polyphosphate multikinase beta</fullName>
        <ecNumber>2.7.1.140</ecNumber>
        <ecNumber>2.7.1.151</ecNumber>
    </recommendedName>
    <alternativeName>
        <fullName>Inositol polyphosphate 6-/3-/5-kinase beta</fullName>
        <shortName>AtIpk2-beta</shortName>
        <shortName>AtIpk2beta</shortName>
    </alternativeName>
</protein>
<name>IPMKB_ARATH</name>
<comment type="function">
    <text evidence="2 4 5">Inositol phosphate kinase with a broad substrate specificity. Phosphorylates inositol 1,4,5-trisphosphate (Ins(1,4,5)P3), inositol 1,4,5,6-tetrakisphosphate (Ins(1,4,5,6)P4), inositol 1,3,4,5-tetrakisphosphate (Ins(1,3,4,5)P4), inositol 1,3,4,6-tetrakisphosphate (Ins(1,3,4,6)P4) and inositol 1,2,3,4,6-pentakisphosphate (Ins(1,2,3,4,6)P5) but not inositol 1,4-bisphosphate (Ins(1,4)P2), inositol 1,3,4-trisphosphate (Ins(1,3,4)P3), inositol 1,2,6-trisphosphate (Ins(1,2,6)P3), inositol 3,4,5,6-tetrakisphosphate (Ins(3,4,5,6)P4), inositol 1,3,4,5,6-pentakisphosphate (Ins(1,3,4,5,6)P5), inositol 1,2,4,5,6-pentakisphosphate (Ins(1,2,4,5,6)P5) or inositol hexakisphosphate (InsP6). Involved in the auxin signaling pathway. Regulates axillary shoot branching and is required for phytate synthesis in seeds.</text>
</comment>
<comment type="catalytic activity">
    <reaction>
        <text>1D-myo-inositol 1,4,5-trisphosphate + 2 ATP = 1D-myo-inositol 1,3,4,5,6-pentakisphosphate + 2 ADP + 2 H(+)</text>
        <dbReference type="Rhea" id="RHEA:32359"/>
        <dbReference type="ChEBI" id="CHEBI:15378"/>
        <dbReference type="ChEBI" id="CHEBI:30616"/>
        <dbReference type="ChEBI" id="CHEBI:57733"/>
        <dbReference type="ChEBI" id="CHEBI:203600"/>
        <dbReference type="ChEBI" id="CHEBI:456216"/>
        <dbReference type="EC" id="2.7.1.151"/>
    </reaction>
</comment>
<comment type="catalytic activity">
    <reaction>
        <text>1D-myo-inositol 1,3,4,6-tetrakisphosphate + ATP = 1D-myo-inositol 1,3,4,5,6-pentakisphosphate + ADP + H(+)</text>
        <dbReference type="Rhea" id="RHEA:12717"/>
        <dbReference type="ChEBI" id="CHEBI:15378"/>
        <dbReference type="ChEBI" id="CHEBI:30616"/>
        <dbReference type="ChEBI" id="CHEBI:57660"/>
        <dbReference type="ChEBI" id="CHEBI:57733"/>
        <dbReference type="ChEBI" id="CHEBI:456216"/>
        <dbReference type="EC" id="2.7.1.140"/>
    </reaction>
</comment>
<comment type="activity regulation">
    <text evidence="6">Down-regulated by KIN10 through its protein phosphorylation.</text>
</comment>
<comment type="subunit">
    <text evidence="6">Interacts with KIN10 and KIN11.</text>
</comment>
<comment type="subcellular location">
    <subcellularLocation>
        <location evidence="3">Nucleus</location>
    </subcellularLocation>
</comment>
<comment type="tissue specificity">
    <text evidence="2 3">Expressed in leaves, stems, roots, siliques and flowers. Detected in vascular strands, stigma cells, the abscission zones of fully elongated siliques, the root central cylinder and the root tip.</text>
</comment>
<comment type="developmental stage">
    <text evidence="3">Expressed in mature pollen, but not in immature pollen grains.</text>
</comment>
<comment type="induction">
    <text evidence="3 5">Induced by auxin, but not by salt, abscisic acid, mannitol, water or drought.</text>
</comment>
<comment type="PTM">
    <text evidence="6">Phosphorylated by KIN10.</text>
</comment>
<comment type="disruption phenotype">
    <text evidence="4 6">Loss-of-function mutant atIpk2beta-1 (T-DNA insertion) is fully complemented by AtIPK2alpha in tissue but not in seeds, leading to the generation of phytate-free seeds. Increased sensitivity to 6% glucose during seedling development and decreased germination in response to the gibberellin biosynthesis inhibitor paclobutrazol (PAC) (PubMed:29216370).</text>
</comment>
<comment type="miscellaneous">
    <text>Does not bind calmodulin.</text>
</comment>
<comment type="similarity">
    <text evidence="7">Belongs to the inositol phosphokinase (IPK) family.</text>
</comment>
<reference key="1">
    <citation type="journal article" date="2002" name="J. Biol. Chem.">
        <title>Molecular and biochemical characterization of two plant inositol polyphosphate 6-/3-/5-kinases.</title>
        <authorList>
            <person name="Stevenson-Paulik J."/>
            <person name="Odom A.R."/>
            <person name="York J.D."/>
        </authorList>
    </citation>
    <scope>NUCLEOTIDE SEQUENCE [MRNA]</scope>
    <scope>MUTAGENESIS OF ASP-100</scope>
    <scope>FUNCTION</scope>
    <scope>TISSUE SPECIFICITY</scope>
    <source>
        <strain>cv. Columbia</strain>
    </source>
</reference>
<reference key="2">
    <citation type="journal article" date="2003" name="Plant Cell">
        <title>Arabidopsis inositol polyphosphate 6-/3-kinase is a nuclear protein that complements a yeast mutant lacking a functional ArgR-Mcm1 transcription complex.</title>
        <authorList>
            <person name="Xia H.-J."/>
            <person name="Brearley C."/>
            <person name="Elge S."/>
            <person name="Kaplan B."/>
            <person name="Fromm H."/>
            <person name="Mueller-Roeber B."/>
        </authorList>
    </citation>
    <scope>NUCLEOTIDE SEQUENCE [GENOMIC DNA / MRNA]</scope>
    <scope>SUBCELLULAR LOCATION</scope>
    <scope>TISSUE SPECIFICITY</scope>
    <scope>INDUCTION</scope>
    <scope>DEVELOPMENTAL STAGE</scope>
    <scope>PHOSPHORYLATION</scope>
    <source>
        <strain>cv. Columbia</strain>
    </source>
</reference>
<reference key="3">
    <citation type="journal article" date="1998" name="DNA Res.">
        <title>Structural analysis of Arabidopsis thaliana chromosome 5. IV. Sequence features of the regions of 1,456,315 bp covered by nineteen physically assigned P1 and TAC clones.</title>
        <authorList>
            <person name="Sato S."/>
            <person name="Kaneko T."/>
            <person name="Kotani H."/>
            <person name="Nakamura Y."/>
            <person name="Asamizu E."/>
            <person name="Miyajima N."/>
            <person name="Tabata S."/>
        </authorList>
    </citation>
    <scope>NUCLEOTIDE SEQUENCE [LARGE SCALE GENOMIC DNA]</scope>
    <source>
        <strain>cv. Columbia</strain>
    </source>
</reference>
<reference key="4">
    <citation type="journal article" date="2017" name="Plant J.">
        <title>Araport11: a complete reannotation of the Arabidopsis thaliana reference genome.</title>
        <authorList>
            <person name="Cheng C.Y."/>
            <person name="Krishnakumar V."/>
            <person name="Chan A.P."/>
            <person name="Thibaud-Nissen F."/>
            <person name="Schobel S."/>
            <person name="Town C.D."/>
        </authorList>
    </citation>
    <scope>GENOME REANNOTATION</scope>
    <source>
        <strain>cv. Columbia</strain>
    </source>
</reference>
<reference key="5">
    <citation type="journal article" date="2003" name="Science">
        <title>Empirical analysis of transcriptional activity in the Arabidopsis genome.</title>
        <authorList>
            <person name="Yamada K."/>
            <person name="Lim J."/>
            <person name="Dale J.M."/>
            <person name="Chen H."/>
            <person name="Shinn P."/>
            <person name="Palm C.J."/>
            <person name="Southwick A.M."/>
            <person name="Wu H.C."/>
            <person name="Kim C.J."/>
            <person name="Nguyen M."/>
            <person name="Pham P.K."/>
            <person name="Cheuk R.F."/>
            <person name="Karlin-Newmann G."/>
            <person name="Liu S.X."/>
            <person name="Lam B."/>
            <person name="Sakano H."/>
            <person name="Wu T."/>
            <person name="Yu G."/>
            <person name="Miranda M."/>
            <person name="Quach H.L."/>
            <person name="Tripp M."/>
            <person name="Chang C.H."/>
            <person name="Lee J.M."/>
            <person name="Toriumi M.J."/>
            <person name="Chan M.M."/>
            <person name="Tang C.C."/>
            <person name="Onodera C.S."/>
            <person name="Deng J.M."/>
            <person name="Akiyama K."/>
            <person name="Ansari Y."/>
            <person name="Arakawa T."/>
            <person name="Banh J."/>
            <person name="Banno F."/>
            <person name="Bowser L."/>
            <person name="Brooks S.Y."/>
            <person name="Carninci P."/>
            <person name="Chao Q."/>
            <person name="Choy N."/>
            <person name="Enju A."/>
            <person name="Goldsmith A.D."/>
            <person name="Gurjal M."/>
            <person name="Hansen N.F."/>
            <person name="Hayashizaki Y."/>
            <person name="Johnson-Hopson C."/>
            <person name="Hsuan V.W."/>
            <person name="Iida K."/>
            <person name="Karnes M."/>
            <person name="Khan S."/>
            <person name="Koesema E."/>
            <person name="Ishida J."/>
            <person name="Jiang P.X."/>
            <person name="Jones T."/>
            <person name="Kawai J."/>
            <person name="Kamiya A."/>
            <person name="Meyers C."/>
            <person name="Nakajima M."/>
            <person name="Narusaka M."/>
            <person name="Seki M."/>
            <person name="Sakurai T."/>
            <person name="Satou M."/>
            <person name="Tamse R."/>
            <person name="Vaysberg M."/>
            <person name="Wallender E.K."/>
            <person name="Wong C."/>
            <person name="Yamamura Y."/>
            <person name="Yuan S."/>
            <person name="Shinozaki K."/>
            <person name="Davis R.W."/>
            <person name="Theologis A."/>
            <person name="Ecker J.R."/>
        </authorList>
    </citation>
    <scope>NUCLEOTIDE SEQUENCE [LARGE SCALE MRNA]</scope>
    <source>
        <strain>cv. Columbia</strain>
    </source>
</reference>
<reference key="6">
    <citation type="submission" date="2002-03" db="EMBL/GenBank/DDBJ databases">
        <title>Full-length cDNA from Arabidopsis thaliana.</title>
        <authorList>
            <person name="Brover V.V."/>
            <person name="Troukhan M.E."/>
            <person name="Alexandrov N.A."/>
            <person name="Lu Y.-P."/>
            <person name="Flavell R.B."/>
            <person name="Feldmann K.A."/>
        </authorList>
    </citation>
    <scope>NUCLEOTIDE SEQUENCE [LARGE SCALE MRNA]</scope>
</reference>
<reference key="7">
    <citation type="journal article" date="2005" name="Proc. Natl. Acad. Sci. U.S.A.">
        <title>Generation of phytate-free seeds in Arabidopsis through disruption of inositol polyphosphate kinases.</title>
        <authorList>
            <person name="Stevenson-Paulik J."/>
            <person name="Bastidas R.J."/>
            <person name="Chiou S.-T."/>
            <person name="Frye R.A."/>
            <person name="York J.D."/>
        </authorList>
    </citation>
    <scope>FUNCTION</scope>
    <scope>DISRUPTION PHENOTYPE</scope>
</reference>
<reference key="8">
    <citation type="journal article" date="2007" name="Plant Physiol.">
        <title>Arabidopsis inositol polyphosphate 6-/3-kinase (AtIpk2beta) is involved in axillary shoot branching via auxin signaling.</title>
        <authorList>
            <person name="Zhang Z.-B."/>
            <person name="Yang G."/>
            <person name="Arana F."/>
            <person name="Chen Z."/>
            <person name="Li Y."/>
            <person name="Xia H.-J."/>
        </authorList>
    </citation>
    <scope>FUNCTION</scope>
    <scope>INDUCTION BY AUXIN</scope>
</reference>
<reference key="9">
    <citation type="journal article" date="2018" name="Plant Cell Physiol.">
        <title>The role of Arabidopsis inositol polyphosphate kinase AtIPK2beta in glucose suppression of seed germination and seedling development.</title>
        <authorList>
            <person name="Yang Q."/>
            <person name="Sang S."/>
            <person name="Chen Y."/>
            <person name="Wei Z."/>
            <person name="Wang P."/>
        </authorList>
    </citation>
    <scope>DISRUPTION PHENOTYPE</scope>
    <scope>INTERACTION WITH KIN10 AND KIN11</scope>
    <scope>PHOSPHORYLATION</scope>
    <scope>ACTIVITY REGULATION</scope>
</reference>
<accession>Q9FLT2</accession>
<accession>Q8LDQ5</accession>
<sequence length="300" mass="33487">MLKVPEHQVAGHIASDGKLGPLVDDQGRFFKPLQGDSRGEHEAKFYESFTSNMKVPDHIHRYFPVYHGTQLVEASDGSGKLPHLVLDDVVSGYANPSVMDVKIGSRTWYPDVSEEYFKKCIKKDRQTTTVSLGFRVSGFKIFDHQESSFWRAEKKLVLGYNADGARLALRKFVSSNSPADSNLTPNCAFASEVYGGCNGILAQLLELKDWFETQTLYHFNSCSILMIYENESILMQGGDDAPAPRAQVKLVDFAHVLDGNGVIDHNFLGGLCSFIKFIKDILQSVEKHDETDTSLLENGR</sequence>
<feature type="chain" id="PRO_0000341577" description="Inositol polyphosphate multikinase beta">
    <location>
        <begin position="1"/>
        <end position="300"/>
    </location>
</feature>
<feature type="modified residue" description="Phosphoserine" evidence="1">
    <location>
        <position position="78"/>
    </location>
</feature>
<feature type="mutagenesis site" description="Loss of kinase activity." evidence="2">
    <original>D</original>
    <variation>A</variation>
    <location>
        <position position="100"/>
    </location>
</feature>
<feature type="sequence conflict" description="In Ref. 6; AAM63075." evidence="7" ref="6">
    <original>M</original>
    <variation>K</variation>
    <location>
        <position position="53"/>
    </location>
</feature>
<feature type="sequence conflict" description="In Ref. 6; AAM63075." evidence="7" ref="6">
    <original>Q</original>
    <variation>K</variation>
    <location>
        <position position="236"/>
    </location>
</feature>
<feature type="sequence conflict" description="In Ref. 6; AAM63075." evidence="7" ref="6">
    <original>D</original>
    <variation>N</variation>
    <location>
        <position position="252"/>
    </location>
</feature>
<organism>
    <name type="scientific">Arabidopsis thaliana</name>
    <name type="common">Mouse-ear cress</name>
    <dbReference type="NCBI Taxonomy" id="3702"/>
    <lineage>
        <taxon>Eukaryota</taxon>
        <taxon>Viridiplantae</taxon>
        <taxon>Streptophyta</taxon>
        <taxon>Embryophyta</taxon>
        <taxon>Tracheophyta</taxon>
        <taxon>Spermatophyta</taxon>
        <taxon>Magnoliopsida</taxon>
        <taxon>eudicotyledons</taxon>
        <taxon>Gunneridae</taxon>
        <taxon>Pentapetalae</taxon>
        <taxon>rosids</taxon>
        <taxon>malvids</taxon>
        <taxon>Brassicales</taxon>
        <taxon>Brassicaceae</taxon>
        <taxon>Camelineae</taxon>
        <taxon>Arabidopsis</taxon>
    </lineage>
</organism>
<keyword id="KW-0067">ATP-binding</keyword>
<keyword id="KW-0418">Kinase</keyword>
<keyword id="KW-0547">Nucleotide-binding</keyword>
<keyword id="KW-0539">Nucleus</keyword>
<keyword id="KW-0597">Phosphoprotein</keyword>
<keyword id="KW-1185">Reference proteome</keyword>
<keyword id="KW-0808">Transferase</keyword>
<gene>
    <name type="primary">IPK2b</name>
    <name type="synonym">IP3K</name>
    <name type="synonym">IPMK</name>
    <name type="ordered locus">At5g61760</name>
    <name type="ORF">MAC9.7</name>
    <name type="ORF">MAC9_60</name>
</gene>